<evidence type="ECO:0000255" key="1">
    <source>
        <dbReference type="HAMAP-Rule" id="MF_01055"/>
    </source>
</evidence>
<dbReference type="EMBL" id="CP000946">
    <property type="protein sequence ID" value="ACA79228.1"/>
    <property type="molecule type" value="Genomic_DNA"/>
</dbReference>
<dbReference type="RefSeq" id="WP_000692204.1">
    <property type="nucleotide sequence ID" value="NZ_MTFT01000035.1"/>
</dbReference>
<dbReference type="SMR" id="B1IRD5"/>
<dbReference type="KEGG" id="ecl:EcolC_3614"/>
<dbReference type="HOGENOM" id="CLU_060196_2_2_6"/>
<dbReference type="UniPathway" id="UPA00117"/>
<dbReference type="GO" id="GO:0009055">
    <property type="term" value="F:electron transfer activity"/>
    <property type="evidence" value="ECO:0007669"/>
    <property type="project" value="InterPro"/>
</dbReference>
<dbReference type="GO" id="GO:0009437">
    <property type="term" value="P:carnitine metabolic process"/>
    <property type="evidence" value="ECO:0007669"/>
    <property type="project" value="UniProtKB-UniRule"/>
</dbReference>
<dbReference type="CDD" id="cd01714">
    <property type="entry name" value="ETF_beta"/>
    <property type="match status" value="1"/>
</dbReference>
<dbReference type="FunFam" id="3.40.50.620:FF:000072">
    <property type="entry name" value="Protein FixA homolog"/>
    <property type="match status" value="1"/>
</dbReference>
<dbReference type="Gene3D" id="3.40.50.620">
    <property type="entry name" value="HUPs"/>
    <property type="match status" value="1"/>
</dbReference>
<dbReference type="HAMAP" id="MF_01055">
    <property type="entry name" value="FixA"/>
    <property type="match status" value="1"/>
</dbReference>
<dbReference type="InterPro" id="IPR000049">
    <property type="entry name" value="ET-Flavoprotein_bsu_CS"/>
</dbReference>
<dbReference type="InterPro" id="IPR014730">
    <property type="entry name" value="ETF_a/b_N"/>
</dbReference>
<dbReference type="InterPro" id="IPR012255">
    <property type="entry name" value="ETF_b"/>
</dbReference>
<dbReference type="InterPro" id="IPR033948">
    <property type="entry name" value="ETF_beta_N"/>
</dbReference>
<dbReference type="InterPro" id="IPR023463">
    <property type="entry name" value="FixA"/>
</dbReference>
<dbReference type="InterPro" id="IPR014729">
    <property type="entry name" value="Rossmann-like_a/b/a_fold"/>
</dbReference>
<dbReference type="NCBIfam" id="NF002888">
    <property type="entry name" value="PRK03359.1"/>
    <property type="match status" value="1"/>
</dbReference>
<dbReference type="PANTHER" id="PTHR21294">
    <property type="entry name" value="ELECTRON TRANSFER FLAVOPROTEIN BETA-SUBUNIT"/>
    <property type="match status" value="1"/>
</dbReference>
<dbReference type="PANTHER" id="PTHR21294:SF17">
    <property type="entry name" value="PROTEIN FIXA"/>
    <property type="match status" value="1"/>
</dbReference>
<dbReference type="Pfam" id="PF01012">
    <property type="entry name" value="ETF"/>
    <property type="match status" value="1"/>
</dbReference>
<dbReference type="PIRSF" id="PIRSF000090">
    <property type="entry name" value="Beta-ETF"/>
    <property type="match status" value="1"/>
</dbReference>
<dbReference type="SMART" id="SM00893">
    <property type="entry name" value="ETF"/>
    <property type="match status" value="1"/>
</dbReference>
<dbReference type="SUPFAM" id="SSF52402">
    <property type="entry name" value="Adenine nucleotide alpha hydrolases-like"/>
    <property type="match status" value="1"/>
</dbReference>
<dbReference type="PROSITE" id="PS01065">
    <property type="entry name" value="ETF_BETA"/>
    <property type="match status" value="1"/>
</dbReference>
<gene>
    <name evidence="1" type="primary">fixA</name>
    <name type="ordered locus">EcolC_3614</name>
</gene>
<accession>B1IRD5</accession>
<name>FIXA_ECOLC</name>
<organism>
    <name type="scientific">Escherichia coli (strain ATCC 8739 / DSM 1576 / NBRC 3972 / NCIMB 8545 / WDCM 00012 / Crooks)</name>
    <dbReference type="NCBI Taxonomy" id="481805"/>
    <lineage>
        <taxon>Bacteria</taxon>
        <taxon>Pseudomonadati</taxon>
        <taxon>Pseudomonadota</taxon>
        <taxon>Gammaproteobacteria</taxon>
        <taxon>Enterobacterales</taxon>
        <taxon>Enterobacteriaceae</taxon>
        <taxon>Escherichia</taxon>
    </lineage>
</organism>
<reference key="1">
    <citation type="submission" date="2008-02" db="EMBL/GenBank/DDBJ databases">
        <title>Complete sequence of Escherichia coli C str. ATCC 8739.</title>
        <authorList>
            <person name="Copeland A."/>
            <person name="Lucas S."/>
            <person name="Lapidus A."/>
            <person name="Glavina del Rio T."/>
            <person name="Dalin E."/>
            <person name="Tice H."/>
            <person name="Bruce D."/>
            <person name="Goodwin L."/>
            <person name="Pitluck S."/>
            <person name="Kiss H."/>
            <person name="Brettin T."/>
            <person name="Detter J.C."/>
            <person name="Han C."/>
            <person name="Kuske C.R."/>
            <person name="Schmutz J."/>
            <person name="Larimer F."/>
            <person name="Land M."/>
            <person name="Hauser L."/>
            <person name="Kyrpides N."/>
            <person name="Mikhailova N."/>
            <person name="Ingram L."/>
            <person name="Richardson P."/>
        </authorList>
    </citation>
    <scope>NUCLEOTIDE SEQUENCE [LARGE SCALE GENOMIC DNA]</scope>
    <source>
        <strain>ATCC 8739 / DSM 1576 / NBRC 3972 / NCIMB 8545 / WDCM 00012 / Crooks</strain>
    </source>
</reference>
<comment type="function">
    <text evidence="1">Required for anaerobic carnitine reduction. May bring reductant to CaiA.</text>
</comment>
<comment type="pathway">
    <text evidence="1">Amine and polyamine metabolism; carnitine metabolism.</text>
</comment>
<comment type="subunit">
    <text evidence="1">Heterodimer of FixA and FixB.</text>
</comment>
<comment type="similarity">
    <text evidence="1">Belongs to the ETF beta-subunit/FixA family.</text>
</comment>
<sequence>MKIITCYKCVPDEQDIAVNNADGSLDFSKADAKISQYDLNAIEAACQLKQQAAEAQVTALSVGGKALTNAKGRKDVLSRGPDELIVVIDDQFEQALPQQTASALAAAAQKAGFDLILCGDGSSDLYAQQVGLLVGEILNIPAVNGVSKIISLTADTLTVERELEDETETLSIPLPAVVAVSTDINSPQIPSMKAILGAAKKPVQVWSAADIGFNAEAAWSEQQVAAPKQRERQRIVIEGDGEEQIAAFAENLRKVI</sequence>
<proteinExistence type="inferred from homology"/>
<protein>
    <recommendedName>
        <fullName evidence="1">Protein FixA</fullName>
    </recommendedName>
</protein>
<feature type="chain" id="PRO_1000084433" description="Protein FixA">
    <location>
        <begin position="1"/>
        <end position="256"/>
    </location>
</feature>
<keyword id="KW-0249">Electron transport</keyword>
<keyword id="KW-0813">Transport</keyword>